<feature type="chain" id="PRO_1000127783" description="Nucleoside triphosphate pyrophosphatase">
    <location>
        <begin position="1"/>
        <end position="206"/>
    </location>
</feature>
<feature type="active site" description="Proton acceptor" evidence="1">
    <location>
        <position position="71"/>
    </location>
</feature>
<protein>
    <recommendedName>
        <fullName evidence="1">Nucleoside triphosphate pyrophosphatase</fullName>
        <ecNumber evidence="1">3.6.1.9</ecNumber>
    </recommendedName>
    <alternativeName>
        <fullName evidence="1">Nucleotide pyrophosphatase</fullName>
        <shortName evidence="1">Nucleotide PPase</shortName>
    </alternativeName>
</protein>
<dbReference type="EC" id="3.6.1.9" evidence="1"/>
<dbReference type="EMBL" id="CP001287">
    <property type="protein sequence ID" value="ACK66540.1"/>
    <property type="molecule type" value="Genomic_DNA"/>
</dbReference>
<dbReference type="RefSeq" id="WP_012595807.1">
    <property type="nucleotide sequence ID" value="NC_011726.1"/>
</dbReference>
<dbReference type="SMR" id="B7K400"/>
<dbReference type="STRING" id="41431.PCC8801_2532"/>
<dbReference type="KEGG" id="cyp:PCC8801_2532"/>
<dbReference type="eggNOG" id="COG0424">
    <property type="taxonomic scope" value="Bacteria"/>
</dbReference>
<dbReference type="HOGENOM" id="CLU_040416_1_2_3"/>
<dbReference type="OrthoDB" id="9807767at2"/>
<dbReference type="Proteomes" id="UP000008204">
    <property type="component" value="Chromosome"/>
</dbReference>
<dbReference type="GO" id="GO:0005737">
    <property type="term" value="C:cytoplasm"/>
    <property type="evidence" value="ECO:0007669"/>
    <property type="project" value="UniProtKB-SubCell"/>
</dbReference>
<dbReference type="GO" id="GO:0047429">
    <property type="term" value="F:nucleoside triphosphate diphosphatase activity"/>
    <property type="evidence" value="ECO:0007669"/>
    <property type="project" value="UniProtKB-EC"/>
</dbReference>
<dbReference type="GO" id="GO:0009117">
    <property type="term" value="P:nucleotide metabolic process"/>
    <property type="evidence" value="ECO:0007669"/>
    <property type="project" value="UniProtKB-KW"/>
</dbReference>
<dbReference type="CDD" id="cd00555">
    <property type="entry name" value="Maf"/>
    <property type="match status" value="1"/>
</dbReference>
<dbReference type="Gene3D" id="3.90.950.10">
    <property type="match status" value="1"/>
</dbReference>
<dbReference type="HAMAP" id="MF_00528">
    <property type="entry name" value="Maf"/>
    <property type="match status" value="1"/>
</dbReference>
<dbReference type="InterPro" id="IPR029001">
    <property type="entry name" value="ITPase-like_fam"/>
</dbReference>
<dbReference type="InterPro" id="IPR003697">
    <property type="entry name" value="Maf-like"/>
</dbReference>
<dbReference type="NCBIfam" id="TIGR00172">
    <property type="entry name" value="maf"/>
    <property type="match status" value="1"/>
</dbReference>
<dbReference type="PANTHER" id="PTHR43213">
    <property type="entry name" value="BIFUNCTIONAL DTTP/UTP PYROPHOSPHATASE/METHYLTRANSFERASE PROTEIN-RELATED"/>
    <property type="match status" value="1"/>
</dbReference>
<dbReference type="PANTHER" id="PTHR43213:SF5">
    <property type="entry name" value="BIFUNCTIONAL DTTP_UTP PYROPHOSPHATASE_METHYLTRANSFERASE PROTEIN-RELATED"/>
    <property type="match status" value="1"/>
</dbReference>
<dbReference type="Pfam" id="PF02545">
    <property type="entry name" value="Maf"/>
    <property type="match status" value="1"/>
</dbReference>
<dbReference type="PIRSF" id="PIRSF006305">
    <property type="entry name" value="Maf"/>
    <property type="match status" value="1"/>
</dbReference>
<dbReference type="SUPFAM" id="SSF52972">
    <property type="entry name" value="ITPase-like"/>
    <property type="match status" value="1"/>
</dbReference>
<comment type="function">
    <text evidence="1">Nucleoside triphosphate pyrophosphatase. May have a dual role in cell division arrest and in preventing the incorporation of modified nucleotides into cellular nucleic acids.</text>
</comment>
<comment type="catalytic activity">
    <reaction evidence="1">
        <text>a ribonucleoside 5'-triphosphate + H2O = a ribonucleoside 5'-phosphate + diphosphate + H(+)</text>
        <dbReference type="Rhea" id="RHEA:23996"/>
        <dbReference type="ChEBI" id="CHEBI:15377"/>
        <dbReference type="ChEBI" id="CHEBI:15378"/>
        <dbReference type="ChEBI" id="CHEBI:33019"/>
        <dbReference type="ChEBI" id="CHEBI:58043"/>
        <dbReference type="ChEBI" id="CHEBI:61557"/>
        <dbReference type="EC" id="3.6.1.9"/>
    </reaction>
</comment>
<comment type="catalytic activity">
    <reaction evidence="1">
        <text>a 2'-deoxyribonucleoside 5'-triphosphate + H2O = a 2'-deoxyribonucleoside 5'-phosphate + diphosphate + H(+)</text>
        <dbReference type="Rhea" id="RHEA:44644"/>
        <dbReference type="ChEBI" id="CHEBI:15377"/>
        <dbReference type="ChEBI" id="CHEBI:15378"/>
        <dbReference type="ChEBI" id="CHEBI:33019"/>
        <dbReference type="ChEBI" id="CHEBI:61560"/>
        <dbReference type="ChEBI" id="CHEBI:65317"/>
        <dbReference type="EC" id="3.6.1.9"/>
    </reaction>
</comment>
<comment type="cofactor">
    <cofactor evidence="1">
        <name>a divalent metal cation</name>
        <dbReference type="ChEBI" id="CHEBI:60240"/>
    </cofactor>
</comment>
<comment type="subcellular location">
    <subcellularLocation>
        <location evidence="1">Cytoplasm</location>
    </subcellularLocation>
</comment>
<comment type="similarity">
    <text evidence="1">Belongs to the Maf family.</text>
</comment>
<sequence length="206" mass="22753">MFSPNFVLASASPARLKLLQTIGINPIVRPSHFDESKIVSDNPRELVEILAKSKAQTIAPDFPESLILGCDSLLVVRGEIYGKPNSPEEAIARWETMQGHHGTLYTGHTLIDTKQHKTLVRCGITEVYFASLDRPTIEAYVNSGEPLKCAGCFALEGKGGLFVDKIEGCHSNVIGLSLPLLRQILQELGYQIAQFWDSRSTPKNEY</sequence>
<proteinExistence type="inferred from homology"/>
<gene>
    <name type="ordered locus">PCC8801_2532</name>
</gene>
<evidence type="ECO:0000255" key="1">
    <source>
        <dbReference type="HAMAP-Rule" id="MF_00528"/>
    </source>
</evidence>
<name>NTPP_RIPO1</name>
<organism>
    <name type="scientific">Rippkaea orientalis (strain PCC 8801 / RF-1)</name>
    <name type="common">Cyanothece sp. (strain PCC 8801)</name>
    <dbReference type="NCBI Taxonomy" id="41431"/>
    <lineage>
        <taxon>Bacteria</taxon>
        <taxon>Bacillati</taxon>
        <taxon>Cyanobacteriota</taxon>
        <taxon>Cyanophyceae</taxon>
        <taxon>Oscillatoriophycideae</taxon>
        <taxon>Chroococcales</taxon>
        <taxon>Aphanothecaceae</taxon>
        <taxon>Rippkaea</taxon>
        <taxon>Rippkaea orientalis</taxon>
    </lineage>
</organism>
<accession>B7K400</accession>
<reference key="1">
    <citation type="journal article" date="2011" name="MBio">
        <title>Novel metabolic attributes of the genus Cyanothece, comprising a group of unicellular nitrogen-fixing Cyanobacteria.</title>
        <authorList>
            <person name="Bandyopadhyay A."/>
            <person name="Elvitigala T."/>
            <person name="Welsh E."/>
            <person name="Stockel J."/>
            <person name="Liberton M."/>
            <person name="Min H."/>
            <person name="Sherman L.A."/>
            <person name="Pakrasi H.B."/>
        </authorList>
    </citation>
    <scope>NUCLEOTIDE SEQUENCE [LARGE SCALE GENOMIC DNA]</scope>
    <source>
        <strain>PCC 8801 / RF-1</strain>
    </source>
</reference>
<keyword id="KW-0963">Cytoplasm</keyword>
<keyword id="KW-0378">Hydrolase</keyword>
<keyword id="KW-0546">Nucleotide metabolism</keyword>
<keyword id="KW-1185">Reference proteome</keyword>